<comment type="function">
    <text evidence="1">Catalyzes the conversion of glucosamine-6-phosphate to glucosamine-1-phosphate.</text>
</comment>
<comment type="catalytic activity">
    <reaction evidence="1">
        <text>alpha-D-glucosamine 1-phosphate = D-glucosamine 6-phosphate</text>
        <dbReference type="Rhea" id="RHEA:23424"/>
        <dbReference type="ChEBI" id="CHEBI:58516"/>
        <dbReference type="ChEBI" id="CHEBI:58725"/>
        <dbReference type="EC" id="5.4.2.10"/>
    </reaction>
</comment>
<comment type="cofactor">
    <cofactor evidence="1">
        <name>Mg(2+)</name>
        <dbReference type="ChEBI" id="CHEBI:18420"/>
    </cofactor>
    <text evidence="1">Binds 1 Mg(2+) ion per subunit.</text>
</comment>
<comment type="PTM">
    <text evidence="1">Activated by phosphorylation.</text>
</comment>
<comment type="similarity">
    <text evidence="1">Belongs to the phosphohexose mutase family.</text>
</comment>
<evidence type="ECO:0000255" key="1">
    <source>
        <dbReference type="HAMAP-Rule" id="MF_01554"/>
    </source>
</evidence>
<proteinExistence type="inferred from homology"/>
<reference key="1">
    <citation type="journal article" date="2003" name="Nature">
        <title>The genome of a motile marine Synechococcus.</title>
        <authorList>
            <person name="Palenik B."/>
            <person name="Brahamsha B."/>
            <person name="Larimer F.W."/>
            <person name="Land M.L."/>
            <person name="Hauser L."/>
            <person name="Chain P."/>
            <person name="Lamerdin J.E."/>
            <person name="Regala W."/>
            <person name="Allen E.E."/>
            <person name="McCarren J."/>
            <person name="Paulsen I.T."/>
            <person name="Dufresne A."/>
            <person name="Partensky F."/>
            <person name="Webb E.A."/>
            <person name="Waterbury J."/>
        </authorList>
    </citation>
    <scope>NUCLEOTIDE SEQUENCE [LARGE SCALE GENOMIC DNA]</scope>
    <source>
        <strain>WH8102</strain>
    </source>
</reference>
<protein>
    <recommendedName>
        <fullName evidence="1">Phosphoglucosamine mutase</fullName>
        <ecNumber evidence="1">5.4.2.10</ecNumber>
    </recommendedName>
</protein>
<gene>
    <name evidence="1" type="primary">glmM</name>
    <name type="ordered locus">SYNW0282</name>
</gene>
<name>GLMM_PARMW</name>
<sequence length="462" mass="48513">MVQRAVPSIGPSLGSSAPGFGTDGIRGRAGTELSPALCLQVGYWIGRVLKADGPVLIGMDSRSSGSMLVAALTAGLTAAGRDVWELGLCATPAVPLLIREVGAAGGLMVSASHNPPADNGIKVFGADGTKLSAERQARVETGLRGEVEDDGPSRCGRSVQRQDLLRSYQDKLLSSVGDRRLNGVPIVLDLCWGSATACAAEVFQTLGADLTVLHGQPDGERINVACGSTQLDPLRQAVVAQGAVMGFAFDGDADRMLAVDARGRVVDGDHVLYLWGSVLQDQKALPGDRLVATVMSNLGFERAWERRGGELERTPVGDQHVHAAMVANGAALGGEQSGHILAASHGLCGDGVLTALQLATLCHGQDIALSDWLDRSFKAYPQKLVNVTVPDRARRKGWSSCMPLQEAVLQAEASMGAAGRVLVRASGTEPVLRVMVESEDQSLVDRWTQHLAAMADEHLNAA</sequence>
<keyword id="KW-0413">Isomerase</keyword>
<keyword id="KW-0460">Magnesium</keyword>
<keyword id="KW-0479">Metal-binding</keyword>
<keyword id="KW-0597">Phosphoprotein</keyword>
<dbReference type="EC" id="5.4.2.10" evidence="1"/>
<dbReference type="EMBL" id="BX569689">
    <property type="protein sequence ID" value="CAE06797.1"/>
    <property type="molecule type" value="Genomic_DNA"/>
</dbReference>
<dbReference type="RefSeq" id="WP_011127156.1">
    <property type="nucleotide sequence ID" value="NC_005070.1"/>
</dbReference>
<dbReference type="SMR" id="Q7U9H6"/>
<dbReference type="STRING" id="84588.SYNW0282"/>
<dbReference type="KEGG" id="syw:SYNW0282"/>
<dbReference type="eggNOG" id="COG1109">
    <property type="taxonomic scope" value="Bacteria"/>
</dbReference>
<dbReference type="HOGENOM" id="CLU_016950_7_0_3"/>
<dbReference type="Proteomes" id="UP000001422">
    <property type="component" value="Chromosome"/>
</dbReference>
<dbReference type="GO" id="GO:0005829">
    <property type="term" value="C:cytosol"/>
    <property type="evidence" value="ECO:0007669"/>
    <property type="project" value="TreeGrafter"/>
</dbReference>
<dbReference type="GO" id="GO:0000287">
    <property type="term" value="F:magnesium ion binding"/>
    <property type="evidence" value="ECO:0007669"/>
    <property type="project" value="UniProtKB-UniRule"/>
</dbReference>
<dbReference type="GO" id="GO:0008966">
    <property type="term" value="F:phosphoglucosamine mutase activity"/>
    <property type="evidence" value="ECO:0007669"/>
    <property type="project" value="UniProtKB-UniRule"/>
</dbReference>
<dbReference type="GO" id="GO:0004615">
    <property type="term" value="F:phosphomannomutase activity"/>
    <property type="evidence" value="ECO:0007669"/>
    <property type="project" value="TreeGrafter"/>
</dbReference>
<dbReference type="GO" id="GO:0005975">
    <property type="term" value="P:carbohydrate metabolic process"/>
    <property type="evidence" value="ECO:0007669"/>
    <property type="project" value="InterPro"/>
</dbReference>
<dbReference type="GO" id="GO:0009252">
    <property type="term" value="P:peptidoglycan biosynthetic process"/>
    <property type="evidence" value="ECO:0007669"/>
    <property type="project" value="TreeGrafter"/>
</dbReference>
<dbReference type="GO" id="GO:0006048">
    <property type="term" value="P:UDP-N-acetylglucosamine biosynthetic process"/>
    <property type="evidence" value="ECO:0007669"/>
    <property type="project" value="TreeGrafter"/>
</dbReference>
<dbReference type="CDD" id="cd05802">
    <property type="entry name" value="GlmM"/>
    <property type="match status" value="1"/>
</dbReference>
<dbReference type="FunFam" id="3.40.120.10:FF:000001">
    <property type="entry name" value="Phosphoglucosamine mutase"/>
    <property type="match status" value="1"/>
</dbReference>
<dbReference type="FunFam" id="3.40.120.10:FF:000002">
    <property type="entry name" value="Phosphoglucosamine mutase"/>
    <property type="match status" value="1"/>
</dbReference>
<dbReference type="Gene3D" id="3.40.120.10">
    <property type="entry name" value="Alpha-D-Glucose-1,6-Bisphosphate, subunit A, domain 3"/>
    <property type="match status" value="3"/>
</dbReference>
<dbReference type="Gene3D" id="3.30.310.50">
    <property type="entry name" value="Alpha-D-phosphohexomutase, C-terminal domain"/>
    <property type="match status" value="1"/>
</dbReference>
<dbReference type="HAMAP" id="MF_01554_B">
    <property type="entry name" value="GlmM_B"/>
    <property type="match status" value="1"/>
</dbReference>
<dbReference type="InterPro" id="IPR005844">
    <property type="entry name" value="A-D-PHexomutase_a/b/a-I"/>
</dbReference>
<dbReference type="InterPro" id="IPR016055">
    <property type="entry name" value="A-D-PHexomutase_a/b/a-I/II/III"/>
</dbReference>
<dbReference type="InterPro" id="IPR005845">
    <property type="entry name" value="A-D-PHexomutase_a/b/a-II"/>
</dbReference>
<dbReference type="InterPro" id="IPR005846">
    <property type="entry name" value="A-D-PHexomutase_a/b/a-III"/>
</dbReference>
<dbReference type="InterPro" id="IPR005843">
    <property type="entry name" value="A-D-PHexomutase_C"/>
</dbReference>
<dbReference type="InterPro" id="IPR036900">
    <property type="entry name" value="A-D-PHexomutase_C_sf"/>
</dbReference>
<dbReference type="InterPro" id="IPR016066">
    <property type="entry name" value="A-D-PHexomutase_CS"/>
</dbReference>
<dbReference type="InterPro" id="IPR005841">
    <property type="entry name" value="Alpha-D-phosphohexomutase_SF"/>
</dbReference>
<dbReference type="InterPro" id="IPR006352">
    <property type="entry name" value="GlmM_bact"/>
</dbReference>
<dbReference type="InterPro" id="IPR050060">
    <property type="entry name" value="Phosphoglucosamine_mutase"/>
</dbReference>
<dbReference type="NCBIfam" id="TIGR01455">
    <property type="entry name" value="glmM"/>
    <property type="match status" value="1"/>
</dbReference>
<dbReference type="PANTHER" id="PTHR42946:SF1">
    <property type="entry name" value="PHOSPHOGLUCOMUTASE (ALPHA-D-GLUCOSE-1,6-BISPHOSPHATE-DEPENDENT)"/>
    <property type="match status" value="1"/>
</dbReference>
<dbReference type="PANTHER" id="PTHR42946">
    <property type="entry name" value="PHOSPHOHEXOSE MUTASE"/>
    <property type="match status" value="1"/>
</dbReference>
<dbReference type="Pfam" id="PF02878">
    <property type="entry name" value="PGM_PMM_I"/>
    <property type="match status" value="1"/>
</dbReference>
<dbReference type="Pfam" id="PF02879">
    <property type="entry name" value="PGM_PMM_II"/>
    <property type="match status" value="1"/>
</dbReference>
<dbReference type="Pfam" id="PF02880">
    <property type="entry name" value="PGM_PMM_III"/>
    <property type="match status" value="1"/>
</dbReference>
<dbReference type="Pfam" id="PF00408">
    <property type="entry name" value="PGM_PMM_IV"/>
    <property type="match status" value="1"/>
</dbReference>
<dbReference type="PRINTS" id="PR00509">
    <property type="entry name" value="PGMPMM"/>
</dbReference>
<dbReference type="SUPFAM" id="SSF55957">
    <property type="entry name" value="Phosphoglucomutase, C-terminal domain"/>
    <property type="match status" value="1"/>
</dbReference>
<dbReference type="SUPFAM" id="SSF53738">
    <property type="entry name" value="Phosphoglucomutase, first 3 domains"/>
    <property type="match status" value="3"/>
</dbReference>
<dbReference type="PROSITE" id="PS00710">
    <property type="entry name" value="PGM_PMM"/>
    <property type="match status" value="1"/>
</dbReference>
<accession>Q7U9H6</accession>
<organism>
    <name type="scientific">Parasynechococcus marenigrum (strain WH8102)</name>
    <dbReference type="NCBI Taxonomy" id="84588"/>
    <lineage>
        <taxon>Bacteria</taxon>
        <taxon>Bacillati</taxon>
        <taxon>Cyanobacteriota</taxon>
        <taxon>Cyanophyceae</taxon>
        <taxon>Synechococcales</taxon>
        <taxon>Prochlorococcaceae</taxon>
        <taxon>Parasynechococcus</taxon>
        <taxon>Parasynechococcus marenigrum</taxon>
    </lineage>
</organism>
<feature type="chain" id="PRO_0000147987" description="Phosphoglucosamine mutase">
    <location>
        <begin position="1"/>
        <end position="462"/>
    </location>
</feature>
<feature type="active site" description="Phosphoserine intermediate" evidence="1">
    <location>
        <position position="112"/>
    </location>
</feature>
<feature type="binding site" description="via phosphate group" evidence="1">
    <location>
        <position position="112"/>
    </location>
    <ligand>
        <name>Mg(2+)</name>
        <dbReference type="ChEBI" id="CHEBI:18420"/>
    </ligand>
</feature>
<feature type="binding site" evidence="1">
    <location>
        <position position="250"/>
    </location>
    <ligand>
        <name>Mg(2+)</name>
        <dbReference type="ChEBI" id="CHEBI:18420"/>
    </ligand>
</feature>
<feature type="binding site" evidence="1">
    <location>
        <position position="252"/>
    </location>
    <ligand>
        <name>Mg(2+)</name>
        <dbReference type="ChEBI" id="CHEBI:18420"/>
    </ligand>
</feature>
<feature type="binding site" evidence="1">
    <location>
        <position position="254"/>
    </location>
    <ligand>
        <name>Mg(2+)</name>
        <dbReference type="ChEBI" id="CHEBI:18420"/>
    </ligand>
</feature>
<feature type="modified residue" description="Phosphoserine" evidence="1">
    <location>
        <position position="112"/>
    </location>
</feature>